<dbReference type="EC" id="2.7.2.8" evidence="1"/>
<dbReference type="EMBL" id="CP000492">
    <property type="protein sequence ID" value="ABL65353.1"/>
    <property type="status" value="ALT_INIT"/>
    <property type="molecule type" value="Genomic_DNA"/>
</dbReference>
<dbReference type="RefSeq" id="WP_041467235.1">
    <property type="nucleotide sequence ID" value="NC_008639.1"/>
</dbReference>
<dbReference type="SMR" id="A1BG26"/>
<dbReference type="STRING" id="290317.Cpha266_1322"/>
<dbReference type="KEGG" id="cph:Cpha266_1322"/>
<dbReference type="eggNOG" id="COG0548">
    <property type="taxonomic scope" value="Bacteria"/>
</dbReference>
<dbReference type="HOGENOM" id="CLU_053680_0_0_10"/>
<dbReference type="OrthoDB" id="9803155at2"/>
<dbReference type="UniPathway" id="UPA00068">
    <property type="reaction ID" value="UER00107"/>
</dbReference>
<dbReference type="Proteomes" id="UP000008701">
    <property type="component" value="Chromosome"/>
</dbReference>
<dbReference type="GO" id="GO:0005737">
    <property type="term" value="C:cytoplasm"/>
    <property type="evidence" value="ECO:0007669"/>
    <property type="project" value="UniProtKB-SubCell"/>
</dbReference>
<dbReference type="GO" id="GO:0003991">
    <property type="term" value="F:acetylglutamate kinase activity"/>
    <property type="evidence" value="ECO:0007669"/>
    <property type="project" value="UniProtKB-UniRule"/>
</dbReference>
<dbReference type="GO" id="GO:0005524">
    <property type="term" value="F:ATP binding"/>
    <property type="evidence" value="ECO:0007669"/>
    <property type="project" value="UniProtKB-UniRule"/>
</dbReference>
<dbReference type="GO" id="GO:0042450">
    <property type="term" value="P:arginine biosynthetic process via ornithine"/>
    <property type="evidence" value="ECO:0007669"/>
    <property type="project" value="UniProtKB-UniRule"/>
</dbReference>
<dbReference type="GO" id="GO:0006526">
    <property type="term" value="P:L-arginine biosynthetic process"/>
    <property type="evidence" value="ECO:0007669"/>
    <property type="project" value="UniProtKB-UniPathway"/>
</dbReference>
<dbReference type="CDD" id="cd04250">
    <property type="entry name" value="AAK_NAGK-C"/>
    <property type="match status" value="1"/>
</dbReference>
<dbReference type="FunFam" id="3.40.1160.10:FF:000004">
    <property type="entry name" value="Acetylglutamate kinase"/>
    <property type="match status" value="1"/>
</dbReference>
<dbReference type="Gene3D" id="3.40.1160.10">
    <property type="entry name" value="Acetylglutamate kinase-like"/>
    <property type="match status" value="1"/>
</dbReference>
<dbReference type="HAMAP" id="MF_00082">
    <property type="entry name" value="ArgB"/>
    <property type="match status" value="1"/>
</dbReference>
<dbReference type="InterPro" id="IPR036393">
    <property type="entry name" value="AceGlu_kinase-like_sf"/>
</dbReference>
<dbReference type="InterPro" id="IPR004662">
    <property type="entry name" value="AcgluKinase_fam"/>
</dbReference>
<dbReference type="InterPro" id="IPR037528">
    <property type="entry name" value="ArgB"/>
</dbReference>
<dbReference type="InterPro" id="IPR001048">
    <property type="entry name" value="Asp/Glu/Uridylate_kinase"/>
</dbReference>
<dbReference type="InterPro" id="IPR001057">
    <property type="entry name" value="Glu/AcGlu_kinase"/>
</dbReference>
<dbReference type="InterPro" id="IPR041727">
    <property type="entry name" value="NAGK-C"/>
</dbReference>
<dbReference type="NCBIfam" id="TIGR00761">
    <property type="entry name" value="argB"/>
    <property type="match status" value="1"/>
</dbReference>
<dbReference type="PANTHER" id="PTHR23342">
    <property type="entry name" value="N-ACETYLGLUTAMATE SYNTHASE"/>
    <property type="match status" value="1"/>
</dbReference>
<dbReference type="PANTHER" id="PTHR23342:SF0">
    <property type="entry name" value="N-ACETYLGLUTAMATE SYNTHASE, MITOCHONDRIAL"/>
    <property type="match status" value="1"/>
</dbReference>
<dbReference type="Pfam" id="PF00696">
    <property type="entry name" value="AA_kinase"/>
    <property type="match status" value="1"/>
</dbReference>
<dbReference type="PIRSF" id="PIRSF000728">
    <property type="entry name" value="NAGK"/>
    <property type="match status" value="1"/>
</dbReference>
<dbReference type="PRINTS" id="PR00474">
    <property type="entry name" value="GLU5KINASE"/>
</dbReference>
<dbReference type="SUPFAM" id="SSF53633">
    <property type="entry name" value="Carbamate kinase-like"/>
    <property type="match status" value="1"/>
</dbReference>
<feature type="chain" id="PRO_0000335617" description="Acetylglutamate kinase">
    <location>
        <begin position="1"/>
        <end position="303"/>
    </location>
</feature>
<feature type="binding site" evidence="1">
    <location>
        <begin position="76"/>
        <end position="77"/>
    </location>
    <ligand>
        <name>substrate</name>
    </ligand>
</feature>
<feature type="binding site" evidence="1">
    <location>
        <position position="98"/>
    </location>
    <ligand>
        <name>substrate</name>
    </ligand>
</feature>
<feature type="binding site" evidence="1">
    <location>
        <position position="192"/>
    </location>
    <ligand>
        <name>substrate</name>
    </ligand>
</feature>
<feature type="site" description="Transition state stabilizer" evidence="1">
    <location>
        <position position="41"/>
    </location>
</feature>
<feature type="site" description="Transition state stabilizer" evidence="1">
    <location>
        <position position="251"/>
    </location>
</feature>
<protein>
    <recommendedName>
        <fullName evidence="1">Acetylglutamate kinase</fullName>
        <ecNumber evidence="1">2.7.2.8</ecNumber>
    </recommendedName>
    <alternativeName>
        <fullName evidence="1">N-acetyl-L-glutamate 5-phosphotransferase</fullName>
    </alternativeName>
    <alternativeName>
        <fullName evidence="1">NAG kinase</fullName>
        <shortName evidence="1">NAGK</shortName>
    </alternativeName>
</protein>
<accession>A1BG26</accession>
<comment type="function">
    <text evidence="1">Catalyzes the ATP-dependent phosphorylation of N-acetyl-L-glutamate.</text>
</comment>
<comment type="catalytic activity">
    <reaction evidence="1">
        <text>N-acetyl-L-glutamate + ATP = N-acetyl-L-glutamyl 5-phosphate + ADP</text>
        <dbReference type="Rhea" id="RHEA:14629"/>
        <dbReference type="ChEBI" id="CHEBI:30616"/>
        <dbReference type="ChEBI" id="CHEBI:44337"/>
        <dbReference type="ChEBI" id="CHEBI:57936"/>
        <dbReference type="ChEBI" id="CHEBI:456216"/>
        <dbReference type="EC" id="2.7.2.8"/>
    </reaction>
</comment>
<comment type="pathway">
    <text evidence="1">Amino-acid biosynthesis; L-arginine biosynthesis; N(2)-acetyl-L-ornithine from L-glutamate: step 2/4.</text>
</comment>
<comment type="subcellular location">
    <subcellularLocation>
        <location evidence="1">Cytoplasm</location>
    </subcellularLocation>
</comment>
<comment type="similarity">
    <text evidence="1">Belongs to the acetylglutamate kinase family. ArgB subfamily.</text>
</comment>
<comment type="sequence caution" evidence="2">
    <conflict type="erroneous initiation">
        <sequence resource="EMBL-CDS" id="ABL65353"/>
    </conflict>
</comment>
<organism>
    <name type="scientific">Chlorobium phaeobacteroides (strain DSM 266 / SMG 266 / 2430)</name>
    <dbReference type="NCBI Taxonomy" id="290317"/>
    <lineage>
        <taxon>Bacteria</taxon>
        <taxon>Pseudomonadati</taxon>
        <taxon>Chlorobiota</taxon>
        <taxon>Chlorobiia</taxon>
        <taxon>Chlorobiales</taxon>
        <taxon>Chlorobiaceae</taxon>
        <taxon>Chlorobium/Pelodictyon group</taxon>
        <taxon>Chlorobium</taxon>
    </lineage>
</organism>
<sequence length="303" mass="32373">MNPLCSELKSGRNAPPAAIGQVLIEALPYIRKFEGKTFVIKYGGSAMKDDKLKNSFAQNVTLLRKVGINVVLVHGGGDAITRTAEKMGLSSRFHHGKRVTDIEMISVVQMTLAGKVNQDIVRLISEHGGKAVGVTGLDADTIKAIPCQNADKLGLVGDVESINTLYIDLLCRAGLIPVIAPIGYDEDGSIYNINADDAASSIAIALKAEKLIYVSDVEGIHVGERILKTICKAEAADFIEQGIISGGMIPKVLSAFKTLDGGVGKIHLIDGKFTHSLLLEIFTHEGVGTQFIAEQDNDNPGKR</sequence>
<reference key="1">
    <citation type="submission" date="2006-12" db="EMBL/GenBank/DDBJ databases">
        <title>Complete sequence of Chlorobium phaeobacteroides DSM 266.</title>
        <authorList>
            <consortium name="US DOE Joint Genome Institute"/>
            <person name="Copeland A."/>
            <person name="Lucas S."/>
            <person name="Lapidus A."/>
            <person name="Barry K."/>
            <person name="Detter J.C."/>
            <person name="Glavina del Rio T."/>
            <person name="Hammon N."/>
            <person name="Israni S."/>
            <person name="Pitluck S."/>
            <person name="Goltsman E."/>
            <person name="Schmutz J."/>
            <person name="Larimer F."/>
            <person name="Land M."/>
            <person name="Hauser L."/>
            <person name="Mikhailova N."/>
            <person name="Li T."/>
            <person name="Overmann J."/>
            <person name="Bryant D.A."/>
            <person name="Richardson P."/>
        </authorList>
    </citation>
    <scope>NUCLEOTIDE SEQUENCE [LARGE SCALE GENOMIC DNA]</scope>
    <source>
        <strain>DSM 266 / SMG 266 / 2430</strain>
    </source>
</reference>
<gene>
    <name evidence="1" type="primary">argB</name>
    <name type="ordered locus">Cpha266_1322</name>
</gene>
<evidence type="ECO:0000255" key="1">
    <source>
        <dbReference type="HAMAP-Rule" id="MF_00082"/>
    </source>
</evidence>
<evidence type="ECO:0000305" key="2"/>
<name>ARGB_CHLPD</name>
<keyword id="KW-0028">Amino-acid biosynthesis</keyword>
<keyword id="KW-0055">Arginine biosynthesis</keyword>
<keyword id="KW-0067">ATP-binding</keyword>
<keyword id="KW-0963">Cytoplasm</keyword>
<keyword id="KW-0418">Kinase</keyword>
<keyword id="KW-0547">Nucleotide-binding</keyword>
<keyword id="KW-1185">Reference proteome</keyword>
<keyword id="KW-0808">Transferase</keyword>
<proteinExistence type="inferred from homology"/>